<keyword id="KW-0162">Chylomicron</keyword>
<keyword id="KW-0967">Endosome</keyword>
<keyword id="KW-0333">Golgi apparatus</keyword>
<keyword id="KW-0345">HDL</keyword>
<keyword id="KW-0445">Lipid transport</keyword>
<keyword id="KW-0597">Phosphoprotein</keyword>
<keyword id="KW-1185">Reference proteome</keyword>
<keyword id="KW-0964">Secreted</keyword>
<keyword id="KW-0732">Signal</keyword>
<keyword id="KW-0813">Transport</keyword>
<keyword id="KW-0850">VLDL</keyword>
<sequence>MASMIALLTWALALLPALASAQTQKGFWDYFSQSSGDKGKAEQVQRQKLAWEPTSLKDSLEQDLSNIDKFLEKLGPLSGQAREPPALPQDPADMRRQLQEELVEVRARLEPYMAEAHEQVGWNLESLRRQLKPYTAELMEQVALRVQELQEQLRVVGEGTKAQLLGGVDEARGLLRELQNLVAHHTGRVQALFHPYAQRLVSGIGRHVQELHRSVAPHAVASPARLSRCVQTLSRKLTLKAKALHARIQQNLDQLREELSAFAGARADGAVEGTSQDPQVLSQEVRQRLQAFRQDTFLQIADFTRAMDQETEEVQLQLAPPPPGHSAFAPEFLQADSGKALSKLQARLEDLWEDINYSLHDHGLGHQEEP</sequence>
<name>APOA5_ACIJB</name>
<organism>
    <name type="scientific">Acinonyx jubatus</name>
    <name type="common">Cheetah</name>
    <dbReference type="NCBI Taxonomy" id="32536"/>
    <lineage>
        <taxon>Eukaryota</taxon>
        <taxon>Metazoa</taxon>
        <taxon>Chordata</taxon>
        <taxon>Craniata</taxon>
        <taxon>Vertebrata</taxon>
        <taxon>Euteleostomi</taxon>
        <taxon>Mammalia</taxon>
        <taxon>Eutheria</taxon>
        <taxon>Laurasiatheria</taxon>
        <taxon>Carnivora</taxon>
        <taxon>Feliformia</taxon>
        <taxon>Felidae</taxon>
        <taxon>Felinae</taxon>
        <taxon>Acinonyx</taxon>
    </lineage>
</organism>
<gene>
    <name type="primary">APOA5</name>
</gene>
<feature type="signal peptide" evidence="3">
    <location>
        <begin position="1"/>
        <end position="21"/>
    </location>
</feature>
<feature type="chain" id="PRO_0000447662" description="Apolipoprotein A-V">
    <location>
        <begin position="22"/>
        <end position="370"/>
    </location>
</feature>
<feature type="modified residue" description="Phosphoserine" evidence="1">
    <location>
        <position position="59"/>
    </location>
</feature>
<evidence type="ECO:0000250" key="1">
    <source>
        <dbReference type="UniProtKB" id="Q6Q788"/>
    </source>
</evidence>
<evidence type="ECO:0000250" key="2">
    <source>
        <dbReference type="UniProtKB" id="Q8C7G5"/>
    </source>
</evidence>
<evidence type="ECO:0000255" key="3"/>
<evidence type="ECO:0000305" key="4"/>
<protein>
    <recommendedName>
        <fullName>Apolipoprotein A-V</fullName>
        <shortName>Apo-AV</shortName>
        <shortName>ApoA-V</shortName>
    </recommendedName>
    <alternativeName>
        <fullName>Apolipoprotein A5</fullName>
    </alternativeName>
</protein>
<accession>P0DSO9</accession>
<proteinExistence type="inferred from homology"/>
<dbReference type="EMBL" id="QURD01003265">
    <property type="status" value="NOT_ANNOTATED_CDS"/>
    <property type="molecule type" value="Genomic_DNA"/>
</dbReference>
<dbReference type="RefSeq" id="XP_026892378.1">
    <property type="nucleotide sequence ID" value="XM_027036577.2"/>
</dbReference>
<dbReference type="RefSeq" id="XP_053060051.1">
    <property type="nucleotide sequence ID" value="XM_053204076.1"/>
</dbReference>
<dbReference type="SMR" id="P0DSO9"/>
<dbReference type="GeneID" id="106966551"/>
<dbReference type="Proteomes" id="UP000504626">
    <property type="component" value="Unplaced"/>
</dbReference>
<dbReference type="GO" id="GO:0042627">
    <property type="term" value="C:chylomicron"/>
    <property type="evidence" value="ECO:0007669"/>
    <property type="project" value="UniProtKB-KW"/>
</dbReference>
<dbReference type="GO" id="GO:0005769">
    <property type="term" value="C:early endosome"/>
    <property type="evidence" value="ECO:0007669"/>
    <property type="project" value="UniProtKB-SubCell"/>
</dbReference>
<dbReference type="GO" id="GO:1903561">
    <property type="term" value="C:extracellular vesicle"/>
    <property type="evidence" value="ECO:0007669"/>
    <property type="project" value="TreeGrafter"/>
</dbReference>
<dbReference type="GO" id="GO:0005794">
    <property type="term" value="C:Golgi apparatus"/>
    <property type="evidence" value="ECO:0007669"/>
    <property type="project" value="UniProtKB-SubCell"/>
</dbReference>
<dbReference type="GO" id="GO:0034364">
    <property type="term" value="C:high-density lipoprotein particle"/>
    <property type="evidence" value="ECO:0007669"/>
    <property type="project" value="UniProtKB-KW"/>
</dbReference>
<dbReference type="GO" id="GO:0005770">
    <property type="term" value="C:late endosome"/>
    <property type="evidence" value="ECO:0007669"/>
    <property type="project" value="UniProtKB-SubCell"/>
</dbReference>
<dbReference type="GO" id="GO:0034361">
    <property type="term" value="C:very-low-density lipoprotein particle"/>
    <property type="evidence" value="ECO:0007669"/>
    <property type="project" value="UniProtKB-KW"/>
</dbReference>
<dbReference type="GO" id="GO:0120020">
    <property type="term" value="F:cholesterol transfer activity"/>
    <property type="evidence" value="ECO:0007669"/>
    <property type="project" value="TreeGrafter"/>
</dbReference>
<dbReference type="GO" id="GO:0060228">
    <property type="term" value="F:phosphatidylcholine-sterol O-acyltransferase activator activity"/>
    <property type="evidence" value="ECO:0007669"/>
    <property type="project" value="TreeGrafter"/>
</dbReference>
<dbReference type="GO" id="GO:0005543">
    <property type="term" value="F:phospholipid binding"/>
    <property type="evidence" value="ECO:0007669"/>
    <property type="project" value="TreeGrafter"/>
</dbReference>
<dbReference type="GO" id="GO:0055090">
    <property type="term" value="P:acylglycerol homeostasis"/>
    <property type="evidence" value="ECO:0007669"/>
    <property type="project" value="TreeGrafter"/>
</dbReference>
<dbReference type="GO" id="GO:0033344">
    <property type="term" value="P:cholesterol efflux"/>
    <property type="evidence" value="ECO:0007669"/>
    <property type="project" value="TreeGrafter"/>
</dbReference>
<dbReference type="GO" id="GO:0008203">
    <property type="term" value="P:cholesterol metabolic process"/>
    <property type="evidence" value="ECO:0007669"/>
    <property type="project" value="TreeGrafter"/>
</dbReference>
<dbReference type="GO" id="GO:0042157">
    <property type="term" value="P:lipoprotein metabolic process"/>
    <property type="evidence" value="ECO:0007669"/>
    <property type="project" value="InterPro"/>
</dbReference>
<dbReference type="GO" id="GO:0033700">
    <property type="term" value="P:phospholipid efflux"/>
    <property type="evidence" value="ECO:0007669"/>
    <property type="project" value="TreeGrafter"/>
</dbReference>
<dbReference type="FunFam" id="1.20.120.20:FF:000006">
    <property type="entry name" value="Apolipoprotein A-V"/>
    <property type="match status" value="1"/>
</dbReference>
<dbReference type="FunFam" id="1.20.120.20:FF:000009">
    <property type="entry name" value="apolipoprotein A-V"/>
    <property type="match status" value="1"/>
</dbReference>
<dbReference type="Gene3D" id="1.20.120.20">
    <property type="entry name" value="Apolipoprotein"/>
    <property type="match status" value="2"/>
</dbReference>
<dbReference type="InterPro" id="IPR000074">
    <property type="entry name" value="ApoA_E"/>
</dbReference>
<dbReference type="InterPro" id="IPR050163">
    <property type="entry name" value="Apolipoprotein_A1/A4/E"/>
</dbReference>
<dbReference type="PANTHER" id="PTHR18976">
    <property type="entry name" value="APOLIPOPROTEIN"/>
    <property type="match status" value="1"/>
</dbReference>
<dbReference type="PANTHER" id="PTHR18976:SF13">
    <property type="entry name" value="APOLIPOPROTEIN A-V"/>
    <property type="match status" value="1"/>
</dbReference>
<dbReference type="Pfam" id="PF01442">
    <property type="entry name" value="Apolipoprotein"/>
    <property type="match status" value="2"/>
</dbReference>
<dbReference type="SUPFAM" id="SSF58113">
    <property type="entry name" value="Apolipoprotein A-I"/>
    <property type="match status" value="1"/>
</dbReference>
<reference key="1">
    <citation type="submission" date="2018-10" db="EMBL/GenBank/DDBJ databases">
        <title>Linked reads assembly of the African cheetah.</title>
        <authorList>
            <person name="Scott A."/>
            <person name="Pukazhenthi B."/>
            <person name="Koepfli K.-P."/>
            <person name="Mohr D."/>
            <person name="Crosier A."/>
            <person name="O'Brien S.J."/>
            <person name="Tamazian G."/>
            <person name="Dobrynin P."/>
            <person name="Komissarov A."/>
            <person name="Kliver S."/>
            <person name="Krasheninnikova K."/>
        </authorList>
    </citation>
    <scope>NUCLEOTIDE SEQUENCE [LARGE SCALE GENOMIC DNA]</scope>
</reference>
<reference key="2">
    <citation type="unpublished observations" date="2019-06">
        <authorList>
            <person name="Puppione D.L."/>
        </authorList>
    </citation>
    <scope>IDENTIFICATION</scope>
</reference>
<comment type="function">
    <text evidence="1 2">Minor apolipoprotein mainly associated with HDL and to a lesser extent with VLDL (By similarity). May also be associated with chylomicrons (By similarity). Important determinant of plasma triglyceride (TG) levels by both being a potent stimulator of apo-CII lipoprotein lipase (LPL) TG hydrolysis and an inhibitor of the hepatic VLDL-TG production rate (without affecting the VLDL-apoB production rate) (By similarity). Activates poorly lecithin:cholesterol acyltransferase (LCAT) and does not enhance efflux of cholesterol from macrophages (By similarity). Binds heparin (By similarity).</text>
</comment>
<comment type="subunit">
    <text evidence="1">Interacts with GPIHBP1 (By similarity). Interacts with SORL1; this interaction leads to APOA5 internalization and sorting either to lysosomes and degradation, or to the trans-Golgi network (By similarity).</text>
</comment>
<comment type="subcellular location">
    <subcellularLocation>
        <location evidence="1">Secreted</location>
    </subcellularLocation>
    <subcellularLocation>
        <location evidence="1">Early endosome</location>
    </subcellularLocation>
    <subcellularLocation>
        <location evidence="1">Late endosome</location>
    </subcellularLocation>
    <subcellularLocation>
        <location evidence="1">Golgi apparatus</location>
        <location evidence="1">trans-Golgi network</location>
    </subcellularLocation>
    <text evidence="1">In the presence of SORL1, internalized to early endosomes, sorted in a retrograde fashion to late endosomes, from which a portion is sent to lysosomes and degradation, another portion is sorted to the trans-Golgi network.</text>
</comment>
<comment type="similarity">
    <text evidence="4">Belongs to the apolipoprotein A1/A4/E family.</text>
</comment>